<accession>B0UWZ4</accession>
<gene>
    <name evidence="1" type="primary">fmt</name>
    <name type="ordered locus">HSM_1933</name>
</gene>
<organism>
    <name type="scientific">Histophilus somni (strain 2336)</name>
    <name type="common">Haemophilus somnus</name>
    <dbReference type="NCBI Taxonomy" id="228400"/>
    <lineage>
        <taxon>Bacteria</taxon>
        <taxon>Pseudomonadati</taxon>
        <taxon>Pseudomonadota</taxon>
        <taxon>Gammaproteobacteria</taxon>
        <taxon>Pasteurellales</taxon>
        <taxon>Pasteurellaceae</taxon>
        <taxon>Histophilus</taxon>
    </lineage>
</organism>
<evidence type="ECO:0000255" key="1">
    <source>
        <dbReference type="HAMAP-Rule" id="MF_00182"/>
    </source>
</evidence>
<comment type="function">
    <text evidence="1">Attaches a formyl group to the free amino group of methionyl-tRNA(fMet). The formyl group appears to play a dual role in the initiator identity of N-formylmethionyl-tRNA by promoting its recognition by IF2 and preventing the misappropriation of this tRNA by the elongation apparatus.</text>
</comment>
<comment type="catalytic activity">
    <reaction evidence="1">
        <text>L-methionyl-tRNA(fMet) + (6R)-10-formyltetrahydrofolate = N-formyl-L-methionyl-tRNA(fMet) + (6S)-5,6,7,8-tetrahydrofolate + H(+)</text>
        <dbReference type="Rhea" id="RHEA:24380"/>
        <dbReference type="Rhea" id="RHEA-COMP:9952"/>
        <dbReference type="Rhea" id="RHEA-COMP:9953"/>
        <dbReference type="ChEBI" id="CHEBI:15378"/>
        <dbReference type="ChEBI" id="CHEBI:57453"/>
        <dbReference type="ChEBI" id="CHEBI:78530"/>
        <dbReference type="ChEBI" id="CHEBI:78844"/>
        <dbReference type="ChEBI" id="CHEBI:195366"/>
        <dbReference type="EC" id="2.1.2.9"/>
    </reaction>
</comment>
<comment type="similarity">
    <text evidence="1">Belongs to the Fmt family.</text>
</comment>
<reference key="1">
    <citation type="submission" date="2008-02" db="EMBL/GenBank/DDBJ databases">
        <title>Complete sequence of Haemophilus somnus 2336.</title>
        <authorList>
            <consortium name="US DOE Joint Genome Institute"/>
            <person name="Siddaramappa S."/>
            <person name="Duncan A.J."/>
            <person name="Challacombe J.F."/>
            <person name="Rainey D."/>
            <person name="Gillaspy A.F."/>
            <person name="Carson M."/>
            <person name="Gipson J."/>
            <person name="Gipson M."/>
            <person name="Bruce D."/>
            <person name="Detter J.C."/>
            <person name="Han C.S."/>
            <person name="Land M."/>
            <person name="Tapia R."/>
            <person name="Thompson L.S."/>
            <person name="Orvis J."/>
            <person name="Zaitshik J."/>
            <person name="Barnes G."/>
            <person name="Brettin T.S."/>
            <person name="Dyer D.W."/>
            <person name="Inzana T.J."/>
        </authorList>
    </citation>
    <scope>NUCLEOTIDE SEQUENCE [LARGE SCALE GENOMIC DNA]</scope>
    <source>
        <strain>2336</strain>
    </source>
</reference>
<dbReference type="EC" id="2.1.2.9" evidence="1"/>
<dbReference type="EMBL" id="CP000947">
    <property type="protein sequence ID" value="ACA31725.1"/>
    <property type="molecule type" value="Genomic_DNA"/>
</dbReference>
<dbReference type="RefSeq" id="WP_012341012.1">
    <property type="nucleotide sequence ID" value="NC_010519.1"/>
</dbReference>
<dbReference type="SMR" id="B0UWZ4"/>
<dbReference type="STRING" id="228400.HSM_1933"/>
<dbReference type="GeneID" id="31488244"/>
<dbReference type="KEGG" id="hsm:HSM_1933"/>
<dbReference type="HOGENOM" id="CLU_033347_1_2_6"/>
<dbReference type="GO" id="GO:0005829">
    <property type="term" value="C:cytosol"/>
    <property type="evidence" value="ECO:0007669"/>
    <property type="project" value="TreeGrafter"/>
</dbReference>
<dbReference type="GO" id="GO:0004479">
    <property type="term" value="F:methionyl-tRNA formyltransferase activity"/>
    <property type="evidence" value="ECO:0007669"/>
    <property type="project" value="UniProtKB-UniRule"/>
</dbReference>
<dbReference type="CDD" id="cd08646">
    <property type="entry name" value="FMT_core_Met-tRNA-FMT_N"/>
    <property type="match status" value="1"/>
</dbReference>
<dbReference type="CDD" id="cd08704">
    <property type="entry name" value="Met_tRNA_FMT_C"/>
    <property type="match status" value="1"/>
</dbReference>
<dbReference type="FunFam" id="3.40.50.170:FF:000003">
    <property type="entry name" value="Methionyl-tRNA formyltransferase"/>
    <property type="match status" value="1"/>
</dbReference>
<dbReference type="Gene3D" id="3.10.25.10">
    <property type="entry name" value="Formyl transferase, C-terminal domain"/>
    <property type="match status" value="1"/>
</dbReference>
<dbReference type="Gene3D" id="3.40.50.170">
    <property type="entry name" value="Formyl transferase, N-terminal domain"/>
    <property type="match status" value="1"/>
</dbReference>
<dbReference type="HAMAP" id="MF_00182">
    <property type="entry name" value="Formyl_trans"/>
    <property type="match status" value="1"/>
</dbReference>
<dbReference type="InterPro" id="IPR005794">
    <property type="entry name" value="Fmt"/>
</dbReference>
<dbReference type="InterPro" id="IPR005793">
    <property type="entry name" value="Formyl_trans_C"/>
</dbReference>
<dbReference type="InterPro" id="IPR037022">
    <property type="entry name" value="Formyl_trans_C_sf"/>
</dbReference>
<dbReference type="InterPro" id="IPR002376">
    <property type="entry name" value="Formyl_transf_N"/>
</dbReference>
<dbReference type="InterPro" id="IPR036477">
    <property type="entry name" value="Formyl_transf_N_sf"/>
</dbReference>
<dbReference type="InterPro" id="IPR011034">
    <property type="entry name" value="Formyl_transferase-like_C_sf"/>
</dbReference>
<dbReference type="InterPro" id="IPR001555">
    <property type="entry name" value="GART_AS"/>
</dbReference>
<dbReference type="InterPro" id="IPR044135">
    <property type="entry name" value="Met-tRNA-FMT_C"/>
</dbReference>
<dbReference type="InterPro" id="IPR041711">
    <property type="entry name" value="Met-tRNA-FMT_N"/>
</dbReference>
<dbReference type="NCBIfam" id="TIGR00460">
    <property type="entry name" value="fmt"/>
    <property type="match status" value="1"/>
</dbReference>
<dbReference type="PANTHER" id="PTHR11138">
    <property type="entry name" value="METHIONYL-TRNA FORMYLTRANSFERASE"/>
    <property type="match status" value="1"/>
</dbReference>
<dbReference type="PANTHER" id="PTHR11138:SF5">
    <property type="entry name" value="METHIONYL-TRNA FORMYLTRANSFERASE, MITOCHONDRIAL"/>
    <property type="match status" value="1"/>
</dbReference>
<dbReference type="Pfam" id="PF02911">
    <property type="entry name" value="Formyl_trans_C"/>
    <property type="match status" value="1"/>
</dbReference>
<dbReference type="Pfam" id="PF00551">
    <property type="entry name" value="Formyl_trans_N"/>
    <property type="match status" value="1"/>
</dbReference>
<dbReference type="SUPFAM" id="SSF50486">
    <property type="entry name" value="FMT C-terminal domain-like"/>
    <property type="match status" value="1"/>
</dbReference>
<dbReference type="SUPFAM" id="SSF53328">
    <property type="entry name" value="Formyltransferase"/>
    <property type="match status" value="1"/>
</dbReference>
<dbReference type="PROSITE" id="PS00373">
    <property type="entry name" value="GART"/>
    <property type="match status" value="1"/>
</dbReference>
<protein>
    <recommendedName>
        <fullName evidence="1">Methionyl-tRNA formyltransferase</fullName>
        <ecNumber evidence="1">2.1.2.9</ecNumber>
    </recommendedName>
</protein>
<name>FMT_HISS2</name>
<keyword id="KW-0648">Protein biosynthesis</keyword>
<keyword id="KW-0808">Transferase</keyword>
<proteinExistence type="inferred from homology"/>
<sequence length="317" mass="34878">MKPLNIIFAGTPDFAAQHLQALLQSQHNVLAVYTQPDKPAGRGQTLRASAVKILAEKHHIPVYQPKSLRKVEVQEHLSKLNADVMVVVAYGLILPLAVLQTFPLGCLNVHGSLLPRWRGAAPIQRAIWAGDKKTGVTIMQMNEGLDTGDMLHKVCCDITPTETSTSLYTKLANIAPKALLEVLDGLEQGLFKAEVQDESLSNYAEKLSKEEAKLDWSLSAEQLERCIRAFNPWPMSYFVTQDSQGTLQTLKVYQASVLPHQNKPCGTILAADKRGIQVATANGVLNLEQLQPAGKKPMSARDLLNSRADWFKIGQVL</sequence>
<feature type="chain" id="PRO_1000077303" description="Methionyl-tRNA formyltransferase">
    <location>
        <begin position="1"/>
        <end position="317"/>
    </location>
</feature>
<feature type="binding site" evidence="1">
    <location>
        <begin position="112"/>
        <end position="115"/>
    </location>
    <ligand>
        <name>(6S)-5,6,7,8-tetrahydrofolate</name>
        <dbReference type="ChEBI" id="CHEBI:57453"/>
    </ligand>
</feature>